<organism>
    <name type="scientific">Mus musculus</name>
    <name type="common">Mouse</name>
    <dbReference type="NCBI Taxonomy" id="10090"/>
    <lineage>
        <taxon>Eukaryota</taxon>
        <taxon>Metazoa</taxon>
        <taxon>Chordata</taxon>
        <taxon>Craniata</taxon>
        <taxon>Vertebrata</taxon>
        <taxon>Euteleostomi</taxon>
        <taxon>Mammalia</taxon>
        <taxon>Eutheria</taxon>
        <taxon>Euarchontoglires</taxon>
        <taxon>Glires</taxon>
        <taxon>Rodentia</taxon>
        <taxon>Myomorpha</taxon>
        <taxon>Muroidea</taxon>
        <taxon>Muridae</taxon>
        <taxon>Murinae</taxon>
        <taxon>Mus</taxon>
        <taxon>Mus</taxon>
    </lineage>
</organism>
<accession>Q6PAJ1</accession>
<accession>E9PZL3</accession>
<accession>Q61339</accession>
<accession>Q6ZPE5</accession>
<accession>Q99LW5</accession>
<feature type="chain" id="PRO_0000273731" description="Breakpoint cluster region protein">
    <location>
        <begin position="1"/>
        <end position="1270"/>
    </location>
</feature>
<feature type="domain" description="DH" evidence="6">
    <location>
        <begin position="497"/>
        <end position="690"/>
    </location>
</feature>
<feature type="domain" description="PH" evidence="7">
    <location>
        <begin position="707"/>
        <end position="865"/>
    </location>
</feature>
<feature type="domain" description="C2" evidence="5">
    <location>
        <begin position="892"/>
        <end position="1019"/>
    </location>
</feature>
<feature type="domain" description="Rho-GAP" evidence="8">
    <location>
        <begin position="1053"/>
        <end position="1247"/>
    </location>
</feature>
<feature type="region of interest" description="Kinase" evidence="3">
    <location>
        <begin position="1"/>
        <end position="428"/>
    </location>
</feature>
<feature type="region of interest" description="Disordered" evidence="9">
    <location>
        <begin position="67"/>
        <end position="173"/>
    </location>
</feature>
<feature type="region of interest" description="Binding to ABL SH2-domain" evidence="1">
    <location>
        <begin position="198"/>
        <end position="387"/>
    </location>
</feature>
<feature type="region of interest" description="Disordered" evidence="9">
    <location>
        <begin position="201"/>
        <end position="249"/>
    </location>
</feature>
<feature type="region of interest" description="Disordered" evidence="9">
    <location>
        <begin position="295"/>
        <end position="396"/>
    </location>
</feature>
<feature type="region of interest" description="Disordered" evidence="9">
    <location>
        <begin position="412"/>
        <end position="481"/>
    </location>
</feature>
<feature type="coiled-coil region" evidence="4">
    <location>
        <begin position="28"/>
        <end position="55"/>
    </location>
</feature>
<feature type="compositionally biased region" description="Low complexity" evidence="9">
    <location>
        <begin position="121"/>
        <end position="139"/>
    </location>
</feature>
<feature type="compositionally biased region" description="Low complexity" evidence="9">
    <location>
        <begin position="348"/>
        <end position="358"/>
    </location>
</feature>
<feature type="compositionally biased region" description="Low complexity" evidence="9">
    <location>
        <begin position="371"/>
        <end position="384"/>
    </location>
</feature>
<feature type="site" description="Arginine finger; crucial for GTP hydrolysis by stabilizing the transition state" evidence="8">
    <location>
        <position position="1089"/>
    </location>
</feature>
<feature type="modified residue" description="N-acetylmethionine" evidence="3">
    <location>
        <position position="1"/>
    </location>
</feature>
<feature type="modified residue" description="Phosphoserine" evidence="3">
    <location>
        <position position="122"/>
    </location>
</feature>
<feature type="modified residue" description="Phosphoserine" evidence="3">
    <location>
        <position position="139"/>
    </location>
</feature>
<feature type="modified residue" description="Phosphotyrosine; by HCK" evidence="3">
    <location>
        <position position="178"/>
    </location>
</feature>
<feature type="modified residue" description="Phosphoserine" evidence="3">
    <location>
        <position position="203"/>
    </location>
</feature>
<feature type="modified residue" description="Phosphoserine" evidence="3">
    <location>
        <position position="216"/>
    </location>
</feature>
<feature type="modified residue" description="Phosphoserine" evidence="16">
    <location>
        <position position="237"/>
    </location>
</feature>
<feature type="modified residue" description="Phosphotyrosine; by FES" evidence="16">
    <location>
        <position position="247"/>
    </location>
</feature>
<feature type="modified residue" description="Phosphoserine" evidence="3">
    <location>
        <position position="358"/>
    </location>
</feature>
<feature type="modified residue" description="Phosphoserine" evidence="3">
    <location>
        <position position="379"/>
    </location>
</feature>
<feature type="modified residue" description="Phosphoserine" evidence="17">
    <location>
        <position position="384"/>
    </location>
</feature>
<feature type="modified residue" description="Phosphothreonine" evidence="17">
    <location>
        <position position="387"/>
    </location>
</feature>
<feature type="modified residue" description="Phosphoserine" evidence="17">
    <location>
        <position position="461"/>
    </location>
</feature>
<feature type="modified residue" description="Phosphoserine" evidence="17">
    <location>
        <position position="465"/>
    </location>
</feature>
<feature type="modified residue" description="Omega-N-methylarginine" evidence="18">
    <location>
        <position position="473"/>
    </location>
</feature>
<feature type="modified residue" description="Phosphoserine" evidence="3">
    <location>
        <position position="475"/>
    </location>
</feature>
<feature type="modified residue" description="Phosphoserine" evidence="3">
    <location>
        <position position="487"/>
    </location>
</feature>
<feature type="modified residue" description="Phosphotyrosine" evidence="3">
    <location>
        <position position="553"/>
    </location>
</feature>
<feature type="modified residue" description="Phosphothreonine" evidence="3">
    <location>
        <position position="640"/>
    </location>
</feature>
<feature type="modified residue" description="Phosphotyrosine" evidence="3">
    <location>
        <position position="643"/>
    </location>
</feature>
<feature type="modified residue" description="Phosphothreonine" evidence="3">
    <location>
        <position position="692"/>
    </location>
</feature>
<feature type="modified residue" description="Phosphoserine" evidence="17">
    <location>
        <position position="1263"/>
    </location>
</feature>
<feature type="sequence conflict" description="In Ref. 3; CAA37013." evidence="14" ref="3">
    <original>S</original>
    <variation>H</variation>
    <location>
        <position position="418"/>
    </location>
</feature>
<feature type="sequence conflict" description="In Ref. 2; AAH60270." evidence="14" ref="2">
    <original>P</original>
    <variation>S</variation>
    <location>
        <position position="1213"/>
    </location>
</feature>
<name>BCR_MOUSE</name>
<keyword id="KW-0007">Acetylation</keyword>
<keyword id="KW-0067">ATP-binding</keyword>
<keyword id="KW-0966">Cell projection</keyword>
<keyword id="KW-0175">Coiled coil</keyword>
<keyword id="KW-0343">GTPase activation</keyword>
<keyword id="KW-0344">Guanine-nucleotide releasing factor</keyword>
<keyword id="KW-0418">Kinase</keyword>
<keyword id="KW-0488">Methylation</keyword>
<keyword id="KW-0547">Nucleotide-binding</keyword>
<keyword id="KW-0597">Phosphoprotein</keyword>
<keyword id="KW-0656">Proto-oncogene</keyword>
<keyword id="KW-1185">Reference proteome</keyword>
<keyword id="KW-0723">Serine/threonine-protein kinase</keyword>
<keyword id="KW-0770">Synapse</keyword>
<keyword id="KW-0808">Transferase</keyword>
<sequence>MVDSVGFAEAWRAQFPDSEPPRMELRSVGDIEQELERCKASIRRLEQEVNQERFRMIYLQTLLAKEKKSYDRQRWGFRRAAQPPDGAAEPRASAPRPPPAPADGADPAPVEESEARPDGEGSPSKGRSASARRPAAAASADRDDRGPPTSVAALRSNFEKIRKGPAQPGSADAEKPFYVNVEFHHERGLVKVNDKEVSDRISSLGSQAMQMERKKSQQSAGQGLGEAPRPHYRGRSSESSCGLDGDYEDAELNPRFLKDNLINANGGNRPPWPPLEYQPYQSIYVGGMMVEGEGKSPLLRSQSTSEQEKRLTWPRRSYSPRSFEDSGGGYTPDCSSNENLTSSEEDFSSGQSSRVSPSPTTYRMFRDKSRSPSQNSQQSFDSSSPPTPQCQKRHRQCQVVVSEATIVGVRKTGQIWPSDGDSTFQGEADSSFGTPPGYGCAADQAEEQRRHQDGLPYIDDSPSSSPHLSSKGRGSLASGALDPTKVSELDLEKGLEMRKWVLSGILASEETYLSHLEALLLPMKPLKAAATTSQPVLTSQQIETIFFKVPELYEIHKEFYDGLFPRVQQWSHQQRVGDLFQKLASQLGVYRAFVDNYGVAMETAEKCCQANAQFAEISENLRARSNKDVKDSTTKNSLETLLYKPVDRVTRSTLVLHDLLKHTPSSHPDHSLLQDALRISQNFLSSINEEITPRRQSMTVKKGEHRQLLKDSFMVELVEGARKLRHIFLFTDLLLCTKLKKQSGGKTQQYDCKWYIPLTDLSFQMVDELEALPNIPLVPDEELDALKIKISQIKSDIQREKRANKGSKVMERLRKKLSEQESLLLLMSPSMAFRVHSRNGKSYTFLISSDYERAEWRESIREQQKKCFKSFSLTSVELQMLTNSCVKLQTVHHIPLTINKEDDESPGLYGFLHVIVHSATGFKQSSNLYCTLEVDSFGYFVNKAKTRVYRDTTEPNWNEEFEIELEGSQTLRILCYEKCYNKMKMTKEDGESADKLMGKGQVQLDPQTLQDRDWQRTVIDMNGIEVKLSVKFTSREFSLKRMPSRKQTGVFGVKIAVVTKRERSKVPYIVRQCVEEIERRGMEEVGIYRVSGVATDIQALKAAFDVNNKDVSVMMSEMDVNAIAGTLKLYFRELPEPLFTDEFYPNFAEGIALSDPVAKESCMLNLLLSLPEANLLTFLFLLDHLKRVAEKETVNKMSLHNLATVFGPTLLRPSEKESKLPANPSQPITMTDSWSLEVMSQVQVLLYFLQLEAIPAPDSKRQSILFSTEV</sequence>
<reference key="1">
    <citation type="journal article" date="2009" name="PLoS Biol.">
        <title>Lineage-specific biology revealed by a finished genome assembly of the mouse.</title>
        <authorList>
            <person name="Church D.M."/>
            <person name="Goodstadt L."/>
            <person name="Hillier L.W."/>
            <person name="Zody M.C."/>
            <person name="Goldstein S."/>
            <person name="She X."/>
            <person name="Bult C.J."/>
            <person name="Agarwala R."/>
            <person name="Cherry J.L."/>
            <person name="DiCuccio M."/>
            <person name="Hlavina W."/>
            <person name="Kapustin Y."/>
            <person name="Meric P."/>
            <person name="Maglott D."/>
            <person name="Birtle Z."/>
            <person name="Marques A.C."/>
            <person name="Graves T."/>
            <person name="Zhou S."/>
            <person name="Teague B."/>
            <person name="Potamousis K."/>
            <person name="Churas C."/>
            <person name="Place M."/>
            <person name="Herschleb J."/>
            <person name="Runnheim R."/>
            <person name="Forrest D."/>
            <person name="Amos-Landgraf J."/>
            <person name="Schwartz D.C."/>
            <person name="Cheng Z."/>
            <person name="Lindblad-Toh K."/>
            <person name="Eichler E.E."/>
            <person name="Ponting C.P."/>
        </authorList>
    </citation>
    <scope>NUCLEOTIDE SEQUENCE [LARGE SCALE GENOMIC DNA]</scope>
    <source>
        <strain>C57BL/6J</strain>
    </source>
</reference>
<reference key="2">
    <citation type="journal article" date="2004" name="Genome Res.">
        <title>The status, quality, and expansion of the NIH full-length cDNA project: the Mammalian Gene Collection (MGC).</title>
        <authorList>
            <consortium name="The MGC Project Team"/>
        </authorList>
    </citation>
    <scope>NUCLEOTIDE SEQUENCE [LARGE SCALE MRNA] OF 212-1270</scope>
    <source>
        <strain>C57BL/6J</strain>
        <strain>FVB/N</strain>
        <tissue>Brain</tissue>
        <tissue>Mammary gland</tissue>
    </source>
</reference>
<reference key="3">
    <citation type="journal article" date="1990" name="Nucleic Acids Res.">
        <title>Unique organization of the human BCR gene promoter.</title>
        <authorList>
            <person name="Zhu Q.S."/>
            <person name="Heisterkamp N."/>
            <person name="Groffen J."/>
        </authorList>
    </citation>
    <scope>NUCLEOTIDE SEQUENCE [GENOMIC DNA] OF 276-428</scope>
</reference>
<reference key="4">
    <citation type="journal article" date="2003" name="DNA Res.">
        <title>Prediction of the coding sequences of mouse homologues of KIAA gene: III. The complete nucleotide sequences of 500 mouse KIAA-homologous cDNAs identified by screening of terminal sequences of cDNA clones randomly sampled from size-fractionated libraries.</title>
        <authorList>
            <person name="Okazaki N."/>
            <person name="Kikuno R."/>
            <person name="Ohara R."/>
            <person name="Inamoto S."/>
            <person name="Koseki H."/>
            <person name="Hiraoka S."/>
            <person name="Saga Y."/>
            <person name="Nagase T."/>
            <person name="Ohara O."/>
            <person name="Koga H."/>
        </authorList>
    </citation>
    <scope>NUCLEOTIDE SEQUENCE [LARGE SCALE MRNA] OF 561-1270</scope>
    <source>
        <tissue>Embryonic tail</tissue>
    </source>
</reference>
<reference key="5">
    <citation type="journal article" date="2006" name="Mol. Cell. Biol.">
        <title>Ccpg1, a novel scaffold protein that regulates the activity of the Rho guanine nucleotide exchange factor Dbs.</title>
        <authorList>
            <person name="Kostenko E.V."/>
            <person name="Olabisi O.O."/>
            <person name="Sahay S."/>
            <person name="Rodriguez P.L."/>
            <person name="Whitehead I.P."/>
        </authorList>
    </citation>
    <scope>POSSIBLE INTERACTION WITH CCPG1</scope>
</reference>
<reference key="6">
    <citation type="journal article" date="2006" name="Mol. Cell. Proteomics">
        <title>Comprehensive identification of phosphorylation sites in postsynaptic density preparations.</title>
        <authorList>
            <person name="Trinidad J.C."/>
            <person name="Specht C.G."/>
            <person name="Thalhammer A."/>
            <person name="Schoepfer R."/>
            <person name="Burlingame A.L."/>
        </authorList>
    </citation>
    <scope>IDENTIFICATION BY MASS SPECTROMETRY [LARGE SCALE ANALYSIS]</scope>
    <source>
        <tissue>Brain</tissue>
    </source>
</reference>
<reference key="7">
    <citation type="journal article" date="2007" name="J. Immunol.">
        <title>Quantitative time-resolved phosphoproteomic analysis of mast cell signaling.</title>
        <authorList>
            <person name="Cao L."/>
            <person name="Yu K."/>
            <person name="Banh C."/>
            <person name="Nguyen V."/>
            <person name="Ritz A."/>
            <person name="Raphael B.J."/>
            <person name="Kawakami Y."/>
            <person name="Kawakami T."/>
            <person name="Salomon A.R."/>
        </authorList>
    </citation>
    <scope>PHOSPHORYLATION [LARGE SCALE ANALYSIS] AT SER-237 AND TYR-247</scope>
    <scope>IDENTIFICATION BY MASS SPECTROMETRY [LARGE SCALE ANALYSIS]</scope>
    <source>
        <tissue>Mast cell</tissue>
    </source>
</reference>
<reference key="8">
    <citation type="journal article" date="2007" name="Mol. Cell. Biol.">
        <title>Abr and Bcr, two homologous Rac GTPase-activating proteins, control multiple cellular functions of murine macrophages.</title>
        <authorList>
            <person name="Cho Y.J."/>
            <person name="Cunnick J.M."/>
            <person name="Yi S.J."/>
            <person name="Kaartinen V."/>
            <person name="Groffen J."/>
            <person name="Heisterkamp N."/>
        </authorList>
    </citation>
    <scope>FUNCTION</scope>
</reference>
<reference key="9">
    <citation type="journal article" date="2007" name="Proc. Natl. Acad. Sci. U.S.A.">
        <title>Large-scale phosphorylation analysis of mouse liver.</title>
        <authorList>
            <person name="Villen J."/>
            <person name="Beausoleil S.A."/>
            <person name="Gerber S.A."/>
            <person name="Gygi S.P."/>
        </authorList>
    </citation>
    <scope>IDENTIFICATION BY MASS SPECTROMETRY [LARGE SCALE ANALYSIS]</scope>
    <source>
        <tissue>Liver</tissue>
    </source>
</reference>
<reference key="10">
    <citation type="journal article" date="2010" name="Cell">
        <title>A tissue-specific atlas of mouse protein phosphorylation and expression.</title>
        <authorList>
            <person name="Huttlin E.L."/>
            <person name="Jedrychowski M.P."/>
            <person name="Elias J.E."/>
            <person name="Goswami T."/>
            <person name="Rad R."/>
            <person name="Beausoleil S.A."/>
            <person name="Villen J."/>
            <person name="Haas W."/>
            <person name="Sowa M.E."/>
            <person name="Gygi S.P."/>
        </authorList>
    </citation>
    <scope>PHOSPHORYLATION [LARGE SCALE ANALYSIS] AT SER-384; THR-387; SER-461; SER-465 AND SER-1263</scope>
    <scope>IDENTIFICATION BY MASS SPECTROMETRY [LARGE SCALE ANALYSIS]</scope>
    <source>
        <tissue>Brain</tissue>
        <tissue>Brown adipose tissue</tissue>
        <tissue>Kidney</tissue>
        <tissue>Lung</tissue>
        <tissue>Spleen</tissue>
        <tissue>Testis</tissue>
    </source>
</reference>
<reference key="11">
    <citation type="journal article" date="2010" name="J. Neurosci.">
        <title>Regulation of synaptic Rac1 activity, long-term potentiation maintenance, and learning and memory by BCR and ABR Rac GTPase-activating proteins.</title>
        <authorList>
            <person name="Oh D."/>
            <person name="Han S."/>
            <person name="Seo J."/>
            <person name="Lee J.R."/>
            <person name="Choi J."/>
            <person name="Groffen J."/>
            <person name="Kim K."/>
            <person name="Cho Y.S."/>
            <person name="Choi H.S."/>
            <person name="Shin H."/>
            <person name="Woo J."/>
            <person name="Won H."/>
            <person name="Park S.K."/>
            <person name="Kim S.Y."/>
            <person name="Jo J."/>
            <person name="Whitcomb D.J."/>
            <person name="Cho K."/>
            <person name="Kim H."/>
            <person name="Bae Y.C."/>
            <person name="Heisterkamp N."/>
            <person name="Choi S.Y."/>
            <person name="Kim E."/>
        </authorList>
    </citation>
    <scope>DISRUPTION PHENOTYPE</scope>
    <scope>TISSUE SPECIFICITY</scope>
    <scope>SUBCELLULAR LOCATION</scope>
</reference>
<reference key="12">
    <citation type="journal article" date="2014" name="J. Biol. Chem.">
        <title>src homology 2 domain containing protein 5 (sh2d5) binds the breakpoint cluster region protein, BCR, and regulates levels of Rac1-GTP.</title>
        <authorList>
            <person name="Gray E.J."/>
            <person name="Petsalaki E."/>
            <person name="James D.A."/>
            <person name="Bagshaw R.D."/>
            <person name="Stacey M.M."/>
            <person name="Rocks O."/>
            <person name="Gingras A.C."/>
            <person name="Pawson T."/>
        </authorList>
    </citation>
    <scope>TISSUE SPECIFICITY</scope>
    <scope>INTERACTION WITH SH2D5</scope>
    <scope>SUBCELLULAR LOCATION</scope>
</reference>
<reference key="13">
    <citation type="journal article" date="2014" name="Mol. Cell. Proteomics">
        <title>Immunoaffinity enrichment and mass spectrometry analysis of protein methylation.</title>
        <authorList>
            <person name="Guo A."/>
            <person name="Gu H."/>
            <person name="Zhou J."/>
            <person name="Mulhern D."/>
            <person name="Wang Y."/>
            <person name="Lee K.A."/>
            <person name="Yang V."/>
            <person name="Aguiar M."/>
            <person name="Kornhauser J."/>
            <person name="Jia X."/>
            <person name="Ren J."/>
            <person name="Beausoleil S.A."/>
            <person name="Silva J.C."/>
            <person name="Vemulapalli V."/>
            <person name="Bedford M.T."/>
            <person name="Comb M.J."/>
        </authorList>
    </citation>
    <scope>METHYLATION [LARGE SCALE ANALYSIS] AT ARG-473</scope>
    <scope>IDENTIFICATION BY MASS SPECTROMETRY [LARGE SCALE ANALYSIS]</scope>
    <source>
        <tissue>Brain</tissue>
    </source>
</reference>
<comment type="function">
    <text evidence="3 11 12">Protein with a unique structure having two opposing regulatory activities toward small GTP-binding proteins. The C-terminus is a GTPase-activating protein (GAP) domain which stimulates GTP hydrolysis by RAC1, RAC2 and CDC42. Accelerates the intrinsic rate of GTP hydrolysis of RAC1 or CDC42, leading to down-regulation of the active GTP-bound form. The central Dbl homology (DH) domain functions as guanine nucleotide exchange factor (GEF) that modulates the GTPases CDC42, RHOA and RAC1. Promotes the conversion of CDC42, RHOA and RAC1 from the GDP-bound to the GTP-bound form. The amino terminus contains an intrinsic kinase activity (By similarity). Functions as an important negative regulator of neuronal RAC1 activity (PubMed:20962234). Regulates macrophage functions such as CSF1-directed motility and phagocytosis through the modulation of RAC1 activity (PubMed:17116687). Plays a major role as a RHOA GEF in keratinocytes being involved in focal adhesion formation and keratinocyte differentiation (By similarity).</text>
</comment>
<comment type="catalytic activity">
    <reaction evidence="3">
        <text>L-seryl-[protein] + ATP = O-phospho-L-seryl-[protein] + ADP + H(+)</text>
        <dbReference type="Rhea" id="RHEA:17989"/>
        <dbReference type="Rhea" id="RHEA-COMP:9863"/>
        <dbReference type="Rhea" id="RHEA-COMP:11604"/>
        <dbReference type="ChEBI" id="CHEBI:15378"/>
        <dbReference type="ChEBI" id="CHEBI:29999"/>
        <dbReference type="ChEBI" id="CHEBI:30616"/>
        <dbReference type="ChEBI" id="CHEBI:83421"/>
        <dbReference type="ChEBI" id="CHEBI:456216"/>
        <dbReference type="EC" id="2.7.11.1"/>
    </reaction>
    <physiologicalReaction direction="left-to-right" evidence="14">
        <dbReference type="Rhea" id="RHEA:17990"/>
    </physiologicalReaction>
</comment>
<comment type="catalytic activity">
    <reaction evidence="3">
        <text>L-threonyl-[protein] + ATP = O-phospho-L-threonyl-[protein] + ADP + H(+)</text>
        <dbReference type="Rhea" id="RHEA:46608"/>
        <dbReference type="Rhea" id="RHEA-COMP:11060"/>
        <dbReference type="Rhea" id="RHEA-COMP:11605"/>
        <dbReference type="ChEBI" id="CHEBI:15378"/>
        <dbReference type="ChEBI" id="CHEBI:30013"/>
        <dbReference type="ChEBI" id="CHEBI:30616"/>
        <dbReference type="ChEBI" id="CHEBI:61977"/>
        <dbReference type="ChEBI" id="CHEBI:456216"/>
        <dbReference type="EC" id="2.7.11.1"/>
    </reaction>
    <physiologicalReaction direction="left-to-right" evidence="14">
        <dbReference type="Rhea" id="RHEA:46609"/>
    </physiologicalReaction>
</comment>
<comment type="subunit">
    <text evidence="3 10 13">Homotetramer. Interacts with PDZK1. Interacts with HCK, FES/FPS, ABL1, PIK3R1 and GRB2 (By similarity). May interact with CCPG1 (PubMed:17000758). Interacts with SH2D5 (PubMed:25331951). Interacts with DLG4 (By similarity).</text>
</comment>
<comment type="subcellular location">
    <subcellularLocation>
        <location evidence="13">Postsynaptic density</location>
    </subcellularLocation>
    <subcellularLocation>
        <location evidence="12">Cell projection</location>
        <location evidence="12">Dendritic spine</location>
    </subcellularLocation>
    <subcellularLocation>
        <location evidence="12">Cell projection</location>
        <location evidence="12">Axon</location>
    </subcellularLocation>
    <subcellularLocation>
        <location evidence="2">Synapse</location>
    </subcellularLocation>
</comment>
<comment type="tissue specificity">
    <text evidence="12 13">Expressed in brain (PubMed:25331951). In hippocampal subregions, most abundant in the CA1 region and expressed at successively lower levels in the dentate gyrus and the CA3 region (PubMed:20962234).</text>
</comment>
<comment type="domain">
    <text evidence="10">The DH domain is involved in interaction with CCPG1.</text>
</comment>
<comment type="domain">
    <text evidence="3">The region involved in binding to ABL1 SH2-domain is rich in serine residues and needs to be Ser/Thr phosphorylated prior to SH2 binding. This region is essential for the activation of the ABL1 tyrosine kinase and transforming potential of the chimeric BCR-ABL oncogene.</text>
</comment>
<comment type="domain">
    <text evidence="3">The amino terminus contains an intrinsic kinase activity. The central Dbl homology (DH) domain functions as a guanine nucleotide exchange factor (GEF) that modulates the GTPases CDC42, RHOA and RAC1. Promotes the conversion of CDC42, RHOA and RAC1 from the GDP-bound to the GTP-bound form. The C-terminus is a Rho-GAP domain which stimulates GTP hydrolysis by RAC1, RAC2 and CDC42. The protein has a unique structure having two opposing regulatory activities toward small GTP-binding proteins.</text>
</comment>
<comment type="PTM">
    <text evidence="3">Autophosphorylated. Phosphorylated by FES/FPS on tyrosine residues, leading to down-regulation of the BCR kinase activity. Phosphorylation at Tyr-178 by HCK is important for interaction with GRB2.</text>
</comment>
<comment type="disruption phenotype">
    <text evidence="12">Mutant mice show impaired spatial and object recognition memory with reduced maintenance of long-term potentiation (LTP) in Schaffer collateral-CA1 pyramidal neuron synapses.</text>
</comment>
<dbReference type="EC" id="2.7.11.1" evidence="3"/>
<dbReference type="EMBL" id="AC160402">
    <property type="status" value="NOT_ANNOTATED_CDS"/>
    <property type="molecule type" value="Genomic_DNA"/>
</dbReference>
<dbReference type="EMBL" id="BC002193">
    <property type="protein sequence ID" value="AAH02193.1"/>
    <property type="molecule type" value="mRNA"/>
</dbReference>
<dbReference type="EMBL" id="BC060270">
    <property type="protein sequence ID" value="AAH60270.1"/>
    <property type="molecule type" value="mRNA"/>
</dbReference>
<dbReference type="EMBL" id="X52831">
    <property type="protein sequence ID" value="CAA37013.1"/>
    <property type="molecule type" value="Genomic_DNA"/>
</dbReference>
<dbReference type="EMBL" id="AK129482">
    <property type="protein sequence ID" value="BAC98292.1"/>
    <property type="molecule type" value="mRNA"/>
</dbReference>
<dbReference type="CCDS" id="CCDS35935.1"/>
<dbReference type="PIR" id="S14194">
    <property type="entry name" value="S14193"/>
</dbReference>
<dbReference type="RefSeq" id="NP_001074881.1">
    <property type="nucleotide sequence ID" value="NM_001081412.3"/>
</dbReference>
<dbReference type="SMR" id="Q6PAJ1"/>
<dbReference type="BioGRID" id="225455">
    <property type="interactions" value="20"/>
</dbReference>
<dbReference type="FunCoup" id="Q6PAJ1">
    <property type="interactions" value="1713"/>
</dbReference>
<dbReference type="IntAct" id="Q6PAJ1">
    <property type="interactions" value="7"/>
</dbReference>
<dbReference type="MINT" id="Q6PAJ1"/>
<dbReference type="STRING" id="10090.ENSMUSP00000126377"/>
<dbReference type="BindingDB" id="Q6PAJ1"/>
<dbReference type="GlyGen" id="Q6PAJ1">
    <property type="glycosylation" value="1 site, 1 O-linked glycan (1 site)"/>
</dbReference>
<dbReference type="iPTMnet" id="Q6PAJ1"/>
<dbReference type="PhosphoSitePlus" id="Q6PAJ1"/>
<dbReference type="SwissPalm" id="Q6PAJ1"/>
<dbReference type="jPOST" id="Q6PAJ1"/>
<dbReference type="PaxDb" id="10090-ENSMUSP00000126377"/>
<dbReference type="PeptideAtlas" id="Q6PAJ1"/>
<dbReference type="ProteomicsDB" id="273480"/>
<dbReference type="Pumba" id="Q6PAJ1"/>
<dbReference type="Antibodypedia" id="9277">
    <property type="antibodies" value="674 antibodies from 40 providers"/>
</dbReference>
<dbReference type="DNASU" id="110279"/>
<dbReference type="Ensembl" id="ENSMUST00000164107.3">
    <property type="protein sequence ID" value="ENSMUSP00000126377.2"/>
    <property type="gene ID" value="ENSMUSG00000009681.11"/>
</dbReference>
<dbReference type="GeneID" id="110279"/>
<dbReference type="KEGG" id="mmu:110279"/>
<dbReference type="UCSC" id="uc007fqb.2">
    <property type="organism name" value="mouse"/>
</dbReference>
<dbReference type="AGR" id="MGI:88141"/>
<dbReference type="CTD" id="613"/>
<dbReference type="MGI" id="MGI:88141">
    <property type="gene designation" value="Bcr"/>
</dbReference>
<dbReference type="VEuPathDB" id="HostDB:ENSMUSG00000009681"/>
<dbReference type="eggNOG" id="KOG4269">
    <property type="taxonomic scope" value="Eukaryota"/>
</dbReference>
<dbReference type="GeneTree" id="ENSGT00940000153491"/>
<dbReference type="HOGENOM" id="CLU_004164_0_0_1"/>
<dbReference type="InParanoid" id="Q6PAJ1"/>
<dbReference type="OMA" id="HDLMPFI"/>
<dbReference type="OrthoDB" id="2155291at2759"/>
<dbReference type="PhylomeDB" id="Q6PAJ1"/>
<dbReference type="TreeFam" id="TF105082"/>
<dbReference type="Reactome" id="R-MMU-8980692">
    <property type="pathway name" value="RHOA GTPase cycle"/>
</dbReference>
<dbReference type="Reactome" id="R-MMU-9013026">
    <property type="pathway name" value="RHOB GTPase cycle"/>
</dbReference>
<dbReference type="Reactome" id="R-MMU-9013106">
    <property type="pathway name" value="RHOC GTPase cycle"/>
</dbReference>
<dbReference type="Reactome" id="R-MMU-9013148">
    <property type="pathway name" value="CDC42 GTPase cycle"/>
</dbReference>
<dbReference type="Reactome" id="R-MMU-9013149">
    <property type="pathway name" value="RAC1 GTPase cycle"/>
</dbReference>
<dbReference type="Reactome" id="R-MMU-9013404">
    <property type="pathway name" value="RAC2 GTPase cycle"/>
</dbReference>
<dbReference type="Reactome" id="R-MMU-9013423">
    <property type="pathway name" value="RAC3 GTPase cycle"/>
</dbReference>
<dbReference type="BioGRID-ORCS" id="110279">
    <property type="hits" value="2 hits in 80 CRISPR screens"/>
</dbReference>
<dbReference type="CD-CODE" id="CE726F99">
    <property type="entry name" value="Postsynaptic density"/>
</dbReference>
<dbReference type="ChiTaRS" id="Bcr">
    <property type="organism name" value="mouse"/>
</dbReference>
<dbReference type="PRO" id="PR:Q6PAJ1"/>
<dbReference type="Proteomes" id="UP000000589">
    <property type="component" value="Chromosome 10"/>
</dbReference>
<dbReference type="RNAct" id="Q6PAJ1">
    <property type="molecule type" value="protein"/>
</dbReference>
<dbReference type="Bgee" id="ENSMUSG00000009681">
    <property type="expression patterns" value="Expressed in olfactory tubercle and 236 other cell types or tissues"/>
</dbReference>
<dbReference type="ExpressionAtlas" id="Q6PAJ1">
    <property type="expression patterns" value="baseline and differential"/>
</dbReference>
<dbReference type="GO" id="GO:0030424">
    <property type="term" value="C:axon"/>
    <property type="evidence" value="ECO:0007669"/>
    <property type="project" value="UniProtKB-SubCell"/>
</dbReference>
<dbReference type="GO" id="GO:0005829">
    <property type="term" value="C:cytosol"/>
    <property type="evidence" value="ECO:0000314"/>
    <property type="project" value="MGI"/>
</dbReference>
<dbReference type="GO" id="GO:0043197">
    <property type="term" value="C:dendritic spine"/>
    <property type="evidence" value="ECO:0007669"/>
    <property type="project" value="UniProtKB-SubCell"/>
</dbReference>
<dbReference type="GO" id="GO:0098978">
    <property type="term" value="C:glutamatergic synapse"/>
    <property type="evidence" value="ECO:0000314"/>
    <property type="project" value="SynGO"/>
</dbReference>
<dbReference type="GO" id="GO:0005886">
    <property type="term" value="C:plasma membrane"/>
    <property type="evidence" value="ECO:0000314"/>
    <property type="project" value="MGI"/>
</dbReference>
<dbReference type="GO" id="GO:0014069">
    <property type="term" value="C:postsynaptic density"/>
    <property type="evidence" value="ECO:0000314"/>
    <property type="project" value="UniProtKB"/>
</dbReference>
<dbReference type="GO" id="GO:0032991">
    <property type="term" value="C:protein-containing complex"/>
    <property type="evidence" value="ECO:0000266"/>
    <property type="project" value="MGI"/>
</dbReference>
<dbReference type="GO" id="GO:0098685">
    <property type="term" value="C:Schaffer collateral - CA1 synapse"/>
    <property type="evidence" value="ECO:0000314"/>
    <property type="project" value="SynGO"/>
</dbReference>
<dbReference type="GO" id="GO:0005524">
    <property type="term" value="F:ATP binding"/>
    <property type="evidence" value="ECO:0007669"/>
    <property type="project" value="UniProtKB-KW"/>
</dbReference>
<dbReference type="GO" id="GO:0005096">
    <property type="term" value="F:GTPase activator activity"/>
    <property type="evidence" value="ECO:0000314"/>
    <property type="project" value="MGI"/>
</dbReference>
<dbReference type="GO" id="GO:0005085">
    <property type="term" value="F:guanyl-nucleotide exchange factor activity"/>
    <property type="evidence" value="ECO:0000250"/>
    <property type="project" value="UniProtKB"/>
</dbReference>
<dbReference type="GO" id="GO:0106310">
    <property type="term" value="F:protein serine kinase activity"/>
    <property type="evidence" value="ECO:0007669"/>
    <property type="project" value="RHEA"/>
</dbReference>
<dbReference type="GO" id="GO:0004674">
    <property type="term" value="F:protein serine/threonine kinase activity"/>
    <property type="evidence" value="ECO:0007669"/>
    <property type="project" value="UniProtKB-KW"/>
</dbReference>
<dbReference type="GO" id="GO:0030036">
    <property type="term" value="P:actin cytoskeleton organization"/>
    <property type="evidence" value="ECO:0000316"/>
    <property type="project" value="MGI"/>
</dbReference>
<dbReference type="GO" id="GO:0090630">
    <property type="term" value="P:activation of GTPase activity"/>
    <property type="evidence" value="ECO:0000250"/>
    <property type="project" value="UniProtKB"/>
</dbReference>
<dbReference type="GO" id="GO:0007420">
    <property type="term" value="P:brain development"/>
    <property type="evidence" value="ECO:0000316"/>
    <property type="project" value="MGI"/>
</dbReference>
<dbReference type="GO" id="GO:0016477">
    <property type="term" value="P:cell migration"/>
    <property type="evidence" value="ECO:0000316"/>
    <property type="project" value="MGI"/>
</dbReference>
<dbReference type="GO" id="GO:0071222">
    <property type="term" value="P:cellular response to lipopolysaccharide"/>
    <property type="evidence" value="ECO:0000315"/>
    <property type="project" value="MGI"/>
</dbReference>
<dbReference type="GO" id="GO:0060216">
    <property type="term" value="P:definitive hemopoiesis"/>
    <property type="evidence" value="ECO:0000315"/>
    <property type="project" value="MGI"/>
</dbReference>
<dbReference type="GO" id="GO:0051649">
    <property type="term" value="P:establishment of localization in cell"/>
    <property type="evidence" value="ECO:0000316"/>
    <property type="project" value="MGI"/>
</dbReference>
<dbReference type="GO" id="GO:0048041">
    <property type="term" value="P:focal adhesion assembly"/>
    <property type="evidence" value="ECO:0000250"/>
    <property type="project" value="UniProtKB"/>
</dbReference>
<dbReference type="GO" id="GO:0048872">
    <property type="term" value="P:homeostasis of number of cells"/>
    <property type="evidence" value="ECO:0000315"/>
    <property type="project" value="MGI"/>
</dbReference>
<dbReference type="GO" id="GO:0042472">
    <property type="term" value="P:inner ear morphogenesis"/>
    <property type="evidence" value="ECO:0000316"/>
    <property type="project" value="MGI"/>
</dbReference>
<dbReference type="GO" id="GO:0065002">
    <property type="term" value="P:intracellular protein transmembrane transport"/>
    <property type="evidence" value="ECO:0000315"/>
    <property type="project" value="MGI"/>
</dbReference>
<dbReference type="GO" id="GO:0030216">
    <property type="term" value="P:keratinocyte differentiation"/>
    <property type="evidence" value="ECO:0000250"/>
    <property type="project" value="UniProtKB"/>
</dbReference>
<dbReference type="GO" id="GO:1905517">
    <property type="term" value="P:macrophage migration"/>
    <property type="evidence" value="ECO:0000316"/>
    <property type="project" value="MGI"/>
</dbReference>
<dbReference type="GO" id="GO:0050804">
    <property type="term" value="P:modulation of chemical synaptic transmission"/>
    <property type="evidence" value="ECO:0000314"/>
    <property type="project" value="SynGO"/>
</dbReference>
<dbReference type="GO" id="GO:0060313">
    <property type="term" value="P:negative regulation of blood vessel remodeling"/>
    <property type="evidence" value="ECO:0000315"/>
    <property type="project" value="CACAO"/>
</dbReference>
<dbReference type="GO" id="GO:0002692">
    <property type="term" value="P:negative regulation of cellular extravasation"/>
    <property type="evidence" value="ECO:0000315"/>
    <property type="project" value="CACAO"/>
</dbReference>
<dbReference type="GO" id="GO:0050728">
    <property type="term" value="P:negative regulation of inflammatory response"/>
    <property type="evidence" value="ECO:0000315"/>
    <property type="project" value="MGI"/>
</dbReference>
<dbReference type="GO" id="GO:1905522">
    <property type="term" value="P:negative regulation of macrophage migration"/>
    <property type="evidence" value="ECO:0000316"/>
    <property type="project" value="MGI"/>
</dbReference>
<dbReference type="GO" id="GO:0043314">
    <property type="term" value="P:negative regulation of neutrophil degranulation"/>
    <property type="evidence" value="ECO:0000316"/>
    <property type="project" value="MGI"/>
</dbReference>
<dbReference type="GO" id="GO:2000378">
    <property type="term" value="P:negative regulation of reactive oxygen species metabolic process"/>
    <property type="evidence" value="ECO:0000315"/>
    <property type="project" value="MGI"/>
</dbReference>
<dbReference type="GO" id="GO:0060268">
    <property type="term" value="P:negative regulation of respiratory burst"/>
    <property type="evidence" value="ECO:0000315"/>
    <property type="project" value="MGI"/>
</dbReference>
<dbReference type="GO" id="GO:0050885">
    <property type="term" value="P:neuromuscular process controlling balance"/>
    <property type="evidence" value="ECO:0000316"/>
    <property type="project" value="MGI"/>
</dbReference>
<dbReference type="GO" id="GO:0043312">
    <property type="term" value="P:neutrophil degranulation"/>
    <property type="evidence" value="ECO:0000316"/>
    <property type="project" value="MGI"/>
</dbReference>
<dbReference type="GO" id="GO:0006909">
    <property type="term" value="P:phagocytosis"/>
    <property type="evidence" value="ECO:0000316"/>
    <property type="project" value="MGI"/>
</dbReference>
<dbReference type="GO" id="GO:0050766">
    <property type="term" value="P:positive regulation of phagocytosis"/>
    <property type="evidence" value="ECO:0000316"/>
    <property type="project" value="MGI"/>
</dbReference>
<dbReference type="GO" id="GO:0051726">
    <property type="term" value="P:regulation of cell cycle"/>
    <property type="evidence" value="ECO:0000314"/>
    <property type="project" value="MGI"/>
</dbReference>
<dbReference type="GO" id="GO:0035023">
    <property type="term" value="P:regulation of Rho protein signal transduction"/>
    <property type="evidence" value="ECO:0000250"/>
    <property type="project" value="UniProtKB"/>
</dbReference>
<dbReference type="GO" id="GO:0043114">
    <property type="term" value="P:regulation of vascular permeability"/>
    <property type="evidence" value="ECO:0000315"/>
    <property type="project" value="CACAO"/>
</dbReference>
<dbReference type="GO" id="GO:0003014">
    <property type="term" value="P:renal system process"/>
    <property type="evidence" value="ECO:0000315"/>
    <property type="project" value="MGI"/>
</dbReference>
<dbReference type="GO" id="GO:0032496">
    <property type="term" value="P:response to lipopolysaccharide"/>
    <property type="evidence" value="ECO:0000315"/>
    <property type="project" value="MGI"/>
</dbReference>
<dbReference type="GO" id="GO:0007264">
    <property type="term" value="P:small GTPase-mediated signal transduction"/>
    <property type="evidence" value="ECO:0000250"/>
    <property type="project" value="UniProtKB"/>
</dbReference>
<dbReference type="CDD" id="cd08686">
    <property type="entry name" value="C2_ABR"/>
    <property type="match status" value="1"/>
</dbReference>
<dbReference type="CDD" id="cd04387">
    <property type="entry name" value="RhoGAP_Bcr"/>
    <property type="match status" value="1"/>
</dbReference>
<dbReference type="CDD" id="cd00160">
    <property type="entry name" value="RhoGEF"/>
    <property type="match status" value="1"/>
</dbReference>
<dbReference type="FunFam" id="2.60.40.150:FF:000057">
    <property type="entry name" value="active breakpoint cluster region-related protein isoform X1"/>
    <property type="match status" value="1"/>
</dbReference>
<dbReference type="FunFam" id="1.20.900.10:FF:000014">
    <property type="entry name" value="active breakpoint cluster region-related protein isoform X2"/>
    <property type="match status" value="1"/>
</dbReference>
<dbReference type="FunFam" id="1.10.555.10:FF:000004">
    <property type="entry name" value="active breakpoint cluster region-related protein-like"/>
    <property type="match status" value="1"/>
</dbReference>
<dbReference type="Gene3D" id="4.10.280.30">
    <property type="entry name" value="Bcr-Abl oncoprotein oligomerisation domain"/>
    <property type="match status" value="1"/>
</dbReference>
<dbReference type="Gene3D" id="2.60.40.150">
    <property type="entry name" value="C2 domain"/>
    <property type="match status" value="1"/>
</dbReference>
<dbReference type="Gene3D" id="1.20.900.10">
    <property type="entry name" value="Dbl homology (DH) domain"/>
    <property type="match status" value="1"/>
</dbReference>
<dbReference type="Gene3D" id="2.30.29.30">
    <property type="entry name" value="Pleckstrin-homology domain (PH domain)/Phosphotyrosine-binding domain (PTB)"/>
    <property type="match status" value="1"/>
</dbReference>
<dbReference type="Gene3D" id="1.10.555.10">
    <property type="entry name" value="Rho GTPase activation protein"/>
    <property type="match status" value="1"/>
</dbReference>
<dbReference type="InterPro" id="IPR037769">
    <property type="entry name" value="Abr/Bcr"/>
</dbReference>
<dbReference type="InterPro" id="IPR015123">
    <property type="entry name" value="Bcr-Abl_oncoprot_oligo"/>
</dbReference>
<dbReference type="InterPro" id="IPR036481">
    <property type="entry name" value="Bcr-Abl_oncoprot_oligo_sf"/>
</dbReference>
<dbReference type="InterPro" id="IPR000008">
    <property type="entry name" value="C2_dom"/>
</dbReference>
<dbReference type="InterPro" id="IPR035892">
    <property type="entry name" value="C2_domain_sf"/>
</dbReference>
<dbReference type="InterPro" id="IPR035899">
    <property type="entry name" value="DBL_dom_sf"/>
</dbReference>
<dbReference type="InterPro" id="IPR000219">
    <property type="entry name" value="DH_dom"/>
</dbReference>
<dbReference type="InterPro" id="IPR001331">
    <property type="entry name" value="GDS_CDC24_CS"/>
</dbReference>
<dbReference type="InterPro" id="IPR011993">
    <property type="entry name" value="PH-like_dom_sf"/>
</dbReference>
<dbReference type="InterPro" id="IPR001849">
    <property type="entry name" value="PH_domain"/>
</dbReference>
<dbReference type="InterPro" id="IPR008936">
    <property type="entry name" value="Rho_GTPase_activation_prot"/>
</dbReference>
<dbReference type="InterPro" id="IPR000198">
    <property type="entry name" value="RhoGAP_dom"/>
</dbReference>
<dbReference type="PANTHER" id="PTHR23182:SF3">
    <property type="entry name" value="BREAKPOINT CLUSTER REGION PROTEIN"/>
    <property type="match status" value="1"/>
</dbReference>
<dbReference type="PANTHER" id="PTHR23182">
    <property type="entry name" value="BREAKPOINT CLUSTER REGION PROTEIN BCR"/>
    <property type="match status" value="1"/>
</dbReference>
<dbReference type="Pfam" id="PF09036">
    <property type="entry name" value="Bcr-Abl_Oligo"/>
    <property type="match status" value="1"/>
</dbReference>
<dbReference type="Pfam" id="PF00168">
    <property type="entry name" value="C2"/>
    <property type="match status" value="1"/>
</dbReference>
<dbReference type="Pfam" id="PF19057">
    <property type="entry name" value="PH_19"/>
    <property type="match status" value="1"/>
</dbReference>
<dbReference type="Pfam" id="PF00620">
    <property type="entry name" value="RhoGAP"/>
    <property type="match status" value="1"/>
</dbReference>
<dbReference type="Pfam" id="PF00621">
    <property type="entry name" value="RhoGEF"/>
    <property type="match status" value="1"/>
</dbReference>
<dbReference type="SMART" id="SM00239">
    <property type="entry name" value="C2"/>
    <property type="match status" value="1"/>
</dbReference>
<dbReference type="SMART" id="SM00233">
    <property type="entry name" value="PH"/>
    <property type="match status" value="1"/>
</dbReference>
<dbReference type="SMART" id="SM00324">
    <property type="entry name" value="RhoGAP"/>
    <property type="match status" value="1"/>
</dbReference>
<dbReference type="SMART" id="SM00325">
    <property type="entry name" value="RhoGEF"/>
    <property type="match status" value="1"/>
</dbReference>
<dbReference type="SUPFAM" id="SSF69036">
    <property type="entry name" value="Bcr-Abl oncoprotein oligomerization domain"/>
    <property type="match status" value="1"/>
</dbReference>
<dbReference type="SUPFAM" id="SSF49562">
    <property type="entry name" value="C2 domain (Calcium/lipid-binding domain, CaLB)"/>
    <property type="match status" value="1"/>
</dbReference>
<dbReference type="SUPFAM" id="SSF48065">
    <property type="entry name" value="DBL homology domain (DH-domain)"/>
    <property type="match status" value="1"/>
</dbReference>
<dbReference type="SUPFAM" id="SSF48350">
    <property type="entry name" value="GTPase activation domain, GAP"/>
    <property type="match status" value="1"/>
</dbReference>
<dbReference type="SUPFAM" id="SSF50729">
    <property type="entry name" value="PH domain-like"/>
    <property type="match status" value="1"/>
</dbReference>
<dbReference type="PROSITE" id="PS50004">
    <property type="entry name" value="C2"/>
    <property type="match status" value="1"/>
</dbReference>
<dbReference type="PROSITE" id="PS00741">
    <property type="entry name" value="DH_1"/>
    <property type="match status" value="1"/>
</dbReference>
<dbReference type="PROSITE" id="PS50010">
    <property type="entry name" value="DH_2"/>
    <property type="match status" value="1"/>
</dbReference>
<dbReference type="PROSITE" id="PS50003">
    <property type="entry name" value="PH_DOMAIN"/>
    <property type="match status" value="1"/>
</dbReference>
<dbReference type="PROSITE" id="PS50238">
    <property type="entry name" value="RHOGAP"/>
    <property type="match status" value="1"/>
</dbReference>
<gene>
    <name evidence="15" type="primary">Bcr</name>
    <name type="synonym">Kiaa3017</name>
</gene>
<protein>
    <recommendedName>
        <fullName evidence="14">Breakpoint cluster region protein</fullName>
        <ecNumber evidence="3">2.7.11.1</ecNumber>
    </recommendedName>
</protein>
<proteinExistence type="evidence at protein level"/>
<evidence type="ECO:0000250" key="1"/>
<evidence type="ECO:0000250" key="2">
    <source>
        <dbReference type="UniProtKB" id="F1LXF1"/>
    </source>
</evidence>
<evidence type="ECO:0000250" key="3">
    <source>
        <dbReference type="UniProtKB" id="P11274"/>
    </source>
</evidence>
<evidence type="ECO:0000255" key="4"/>
<evidence type="ECO:0000255" key="5">
    <source>
        <dbReference type="PROSITE-ProRule" id="PRU00041"/>
    </source>
</evidence>
<evidence type="ECO:0000255" key="6">
    <source>
        <dbReference type="PROSITE-ProRule" id="PRU00062"/>
    </source>
</evidence>
<evidence type="ECO:0000255" key="7">
    <source>
        <dbReference type="PROSITE-ProRule" id="PRU00145"/>
    </source>
</evidence>
<evidence type="ECO:0000255" key="8">
    <source>
        <dbReference type="PROSITE-ProRule" id="PRU00172"/>
    </source>
</evidence>
<evidence type="ECO:0000256" key="9">
    <source>
        <dbReference type="SAM" id="MobiDB-lite"/>
    </source>
</evidence>
<evidence type="ECO:0000269" key="10">
    <source>
    </source>
</evidence>
<evidence type="ECO:0000269" key="11">
    <source>
    </source>
</evidence>
<evidence type="ECO:0000269" key="12">
    <source>
    </source>
</evidence>
<evidence type="ECO:0000269" key="13">
    <source>
    </source>
</evidence>
<evidence type="ECO:0000305" key="14"/>
<evidence type="ECO:0000312" key="15">
    <source>
        <dbReference type="EMBL" id="AC160402"/>
    </source>
</evidence>
<evidence type="ECO:0007744" key="16">
    <source>
    </source>
</evidence>
<evidence type="ECO:0007744" key="17">
    <source>
    </source>
</evidence>
<evidence type="ECO:0007744" key="18">
    <source>
    </source>
</evidence>